<organism>
    <name type="scientific">Escherichia coli (strain K12)</name>
    <dbReference type="NCBI Taxonomy" id="83333"/>
    <lineage>
        <taxon>Bacteria</taxon>
        <taxon>Pseudomonadati</taxon>
        <taxon>Pseudomonadota</taxon>
        <taxon>Gammaproteobacteria</taxon>
        <taxon>Enterobacterales</taxon>
        <taxon>Enterobacteriaceae</taxon>
        <taxon>Escherichia</taxon>
    </lineage>
</organism>
<gene>
    <name evidence="1 4" type="primary">hisD</name>
    <name type="ordered locus">b2020</name>
    <name type="ordered locus">JW2002</name>
</gene>
<reference evidence="8" key="1">
    <citation type="journal article" date="1988" name="J. Mol. Biol.">
        <title>Structure and function of the Salmonella typhimurium and Escherichia coli K-12 histidine operons.</title>
        <authorList>
            <person name="Carlomagno M.S."/>
            <person name="Chiariotti L."/>
            <person name="Alifano P."/>
            <person name="Nappo A.G."/>
            <person name="Bruni C.B."/>
        </authorList>
    </citation>
    <scope>NUCLEOTIDE SEQUENCE [GENOMIC DNA]</scope>
    <source>
        <strain>K12</strain>
    </source>
</reference>
<reference evidence="7" key="2">
    <citation type="journal article" date="1986" name="Mol. Gen. Genet.">
        <title>Nucleotide sequence of the Escherichia coli hisD gene and of the Escherichia coli and Salmonella typhimurium hisIE region.</title>
        <authorList>
            <person name="Chiariotti L."/>
            <person name="Alifano P."/>
            <person name="Carlomagno M.S."/>
            <person name="Bruni C.B."/>
        </authorList>
    </citation>
    <scope>NUCLEOTIDE SEQUENCE [GENOMIC DNA]</scope>
</reference>
<reference evidence="9" key="3">
    <citation type="journal article" date="1990" name="Nucleic Acids Res.">
        <title>Nucleotide and amino acid polymorphism in the gene for L-histidinol dehydrogenase of Escherichia coli K12.</title>
        <authorList>
            <person name="Savic D.J."/>
            <person name="Jovanovic G."/>
            <person name="Kostic T."/>
        </authorList>
    </citation>
    <scope>NUCLEOTIDE SEQUENCE [GENOMIC DNA]</scope>
    <source>
        <strain>K12 / W3100 / ATCC 14948 / DSM 6302</strain>
    </source>
</reference>
<reference key="4">
    <citation type="journal article" date="1996" name="DNA Res.">
        <title>A 460-kb DNA sequence of the Escherichia coli K-12 genome corresponding to the 40.1-50.0 min region on the linkage map.</title>
        <authorList>
            <person name="Itoh T."/>
            <person name="Aiba H."/>
            <person name="Baba T."/>
            <person name="Fujita K."/>
            <person name="Hayashi K."/>
            <person name="Inada T."/>
            <person name="Isono K."/>
            <person name="Kasai H."/>
            <person name="Kimura S."/>
            <person name="Kitakawa M."/>
            <person name="Kitagawa M."/>
            <person name="Makino K."/>
            <person name="Miki T."/>
            <person name="Mizobuchi K."/>
            <person name="Mori H."/>
            <person name="Mori T."/>
            <person name="Motomura K."/>
            <person name="Nakade S."/>
            <person name="Nakamura Y."/>
            <person name="Nashimoto H."/>
            <person name="Nishio Y."/>
            <person name="Oshima T."/>
            <person name="Saito N."/>
            <person name="Sampei G."/>
            <person name="Seki Y."/>
            <person name="Sivasundaram S."/>
            <person name="Tagami H."/>
            <person name="Takeda J."/>
            <person name="Takemoto K."/>
            <person name="Wada C."/>
            <person name="Yamamoto Y."/>
            <person name="Horiuchi T."/>
        </authorList>
    </citation>
    <scope>NUCLEOTIDE SEQUENCE [LARGE SCALE GENOMIC DNA]</scope>
    <source>
        <strain>K12 / W3110 / ATCC 27325 / DSM 5911</strain>
    </source>
</reference>
<reference key="5">
    <citation type="journal article" date="1997" name="Science">
        <title>The complete genome sequence of Escherichia coli K-12.</title>
        <authorList>
            <person name="Blattner F.R."/>
            <person name="Plunkett G. III"/>
            <person name="Bloch C.A."/>
            <person name="Perna N.T."/>
            <person name="Burland V."/>
            <person name="Riley M."/>
            <person name="Collado-Vides J."/>
            <person name="Glasner J.D."/>
            <person name="Rode C.K."/>
            <person name="Mayhew G.F."/>
            <person name="Gregor J."/>
            <person name="Davis N.W."/>
            <person name="Kirkpatrick H.A."/>
            <person name="Goeden M.A."/>
            <person name="Rose D.J."/>
            <person name="Mau B."/>
            <person name="Shao Y."/>
        </authorList>
    </citation>
    <scope>NUCLEOTIDE SEQUENCE [LARGE SCALE GENOMIC DNA]</scope>
    <source>
        <strain>K12 / MG1655 / ATCC 47076</strain>
    </source>
</reference>
<reference key="6">
    <citation type="journal article" date="2006" name="Mol. Syst. Biol.">
        <title>Highly accurate genome sequences of Escherichia coli K-12 strains MG1655 and W3110.</title>
        <authorList>
            <person name="Hayashi K."/>
            <person name="Morooka N."/>
            <person name="Yamamoto Y."/>
            <person name="Fujita K."/>
            <person name="Isono K."/>
            <person name="Choi S."/>
            <person name="Ohtsubo E."/>
            <person name="Baba T."/>
            <person name="Wanner B.L."/>
            <person name="Mori H."/>
            <person name="Horiuchi T."/>
        </authorList>
    </citation>
    <scope>NUCLEOTIDE SEQUENCE [LARGE SCALE GENOMIC DNA]</scope>
    <source>
        <strain>K12 / W3110 / ATCC 27325 / DSM 5911</strain>
    </source>
</reference>
<reference key="7">
    <citation type="journal article" date="1980" name="J. Bacteriol.">
        <title>Structural and physiological studies of the Escherichia coli histidine operon inserted into plasmid vectors.</title>
        <authorList>
            <person name="Bruni C.B."/>
            <person name="Musti A.M."/>
            <person name="Frunzio R."/>
            <person name="Blasi F."/>
        </authorList>
    </citation>
    <scope>NUCLEOTIDE SEQUENCE [GENOMIC DNA] OF 296-319</scope>
</reference>
<reference key="8">
    <citation type="journal article" date="1997" name="Electrophoresis">
        <title>Comparing the predicted and observed properties of proteins encoded in the genome of Escherichia coli K-12.</title>
        <authorList>
            <person name="Link A.J."/>
            <person name="Robison K."/>
            <person name="Church G.M."/>
        </authorList>
    </citation>
    <scope>PROTEIN SEQUENCE OF 2-13</scope>
    <source>
        <strain>K12 / EMG2</strain>
    </source>
</reference>
<reference evidence="10 11 12 13" key="9">
    <citation type="journal article" date="2002" name="Proc. Natl. Acad. Sci. U.S.A.">
        <title>Mechanism of action and NAD+-binding mode revealed by the crystal structure of L-histidinol dehydrogenase.</title>
        <authorList>
            <person name="Barbosa J.A.R.G."/>
            <person name="Sivaraman J."/>
            <person name="Li Y."/>
            <person name="Larocque R."/>
            <person name="Matte A."/>
            <person name="Schrag J.D."/>
            <person name="Cygler M."/>
        </authorList>
    </citation>
    <scope>X-RAY CRYSTALLOGRAPHY (1.70 ANGSTROMS) IN COMPLEX WITH L-HISTIDINE; NAD AND ZINC</scope>
    <scope>ACTIVE SITE</scope>
    <scope>COFACTOR</scope>
    <source>
        <strain>K12 / MC1061 / ATCC 53338 / DSM 7140</strain>
    </source>
</reference>
<proteinExistence type="evidence at protein level"/>
<feature type="initiator methionine" description="Removed" evidence="3">
    <location>
        <position position="1"/>
    </location>
</feature>
<feature type="chain" id="PRO_0000135770" description="Histidinol dehydrogenase">
    <location>
        <begin position="2"/>
        <end position="434"/>
    </location>
</feature>
<feature type="active site" description="Proton acceptor" evidence="6">
    <location>
        <position position="326"/>
    </location>
</feature>
<feature type="active site" description="Proton acceptor" evidence="6">
    <location>
        <position position="327"/>
    </location>
</feature>
<feature type="binding site" evidence="2">
    <location>
        <position position="130"/>
    </location>
    <ligand>
        <name>NAD(+)</name>
        <dbReference type="ChEBI" id="CHEBI:57540"/>
    </ligand>
</feature>
<feature type="binding site" evidence="2">
    <location>
        <position position="188"/>
    </location>
    <ligand>
        <name>NAD(+)</name>
        <dbReference type="ChEBI" id="CHEBI:57540"/>
    </ligand>
</feature>
<feature type="binding site" evidence="2">
    <location>
        <position position="211"/>
    </location>
    <ligand>
        <name>NAD(+)</name>
        <dbReference type="ChEBI" id="CHEBI:57540"/>
    </ligand>
</feature>
<feature type="binding site" evidence="6">
    <location>
        <position position="237"/>
    </location>
    <ligand>
        <name>substrate</name>
    </ligand>
</feature>
<feature type="binding site" evidence="6">
    <location>
        <position position="259"/>
    </location>
    <ligand>
        <name>substrate</name>
    </ligand>
</feature>
<feature type="binding site" evidence="2">
    <location>
        <position position="259"/>
    </location>
    <ligand>
        <name>Zn(2+)</name>
        <dbReference type="ChEBI" id="CHEBI:29105"/>
    </ligand>
</feature>
<feature type="binding site" evidence="6">
    <location>
        <position position="262"/>
    </location>
    <ligand>
        <name>substrate</name>
    </ligand>
</feature>
<feature type="binding site" evidence="2">
    <location>
        <position position="262"/>
    </location>
    <ligand>
        <name>Zn(2+)</name>
        <dbReference type="ChEBI" id="CHEBI:29105"/>
    </ligand>
</feature>
<feature type="binding site" evidence="6">
    <location>
        <position position="327"/>
    </location>
    <ligand>
        <name>substrate</name>
    </ligand>
</feature>
<feature type="binding site" evidence="6">
    <location>
        <position position="360"/>
    </location>
    <ligand>
        <name>substrate</name>
    </ligand>
</feature>
<feature type="binding site" evidence="2">
    <location>
        <position position="360"/>
    </location>
    <ligand>
        <name>Zn(2+)</name>
        <dbReference type="ChEBI" id="CHEBI:29105"/>
    </ligand>
</feature>
<feature type="binding site" evidence="6">
    <location>
        <position position="414"/>
    </location>
    <ligand>
        <name>substrate</name>
    </ligand>
</feature>
<feature type="binding site" evidence="6">
    <location>
        <position position="419"/>
    </location>
    <ligand>
        <name>substrate</name>
    </ligand>
</feature>
<feature type="binding site" evidence="2">
    <location>
        <position position="419"/>
    </location>
    <ligand>
        <name>Zn(2+)</name>
        <dbReference type="ChEBI" id="CHEBI:29105"/>
    </ligand>
</feature>
<feature type="sequence conflict" description="In Ref. 1; CAA31812 and 2; CAA27610." evidence="5" ref="1 2">
    <original>E</original>
    <variation>V</variation>
    <location>
        <position position="15"/>
    </location>
</feature>
<feature type="sequence conflict" description="In Ref. 2; CAA27610." evidence="5" ref="2">
    <original>M</original>
    <variation>T</variation>
    <location>
        <position position="22"/>
    </location>
</feature>
<feature type="sequence conflict" description="In Ref. 1; CAA31812 and 2; CAA27610." evidence="5" ref="1 2">
    <original>S</original>
    <variation>R</variation>
    <location>
        <position position="150"/>
    </location>
</feature>
<feature type="sequence conflict" description="In Ref. 3; CAA36882." evidence="5" ref="3">
    <original>V</original>
    <variation>A</variation>
    <location>
        <position position="157"/>
    </location>
</feature>
<feature type="sequence conflict" description="In Ref. 1; CAA31812 and 2; CAA27610." evidence="5" ref="1 2">
    <original>L</original>
    <variation>S</variation>
    <location>
        <position position="313"/>
    </location>
</feature>
<feature type="sequence conflict" description="In Ref. 1; CAA31812 and 2; CAA27610." evidence="5" ref="1 2">
    <original>L</original>
    <variation>V</variation>
    <location>
        <position position="403"/>
    </location>
</feature>
<feature type="strand" evidence="15">
    <location>
        <begin position="5"/>
        <end position="8"/>
    </location>
</feature>
<feature type="helix" evidence="15">
    <location>
        <begin position="9"/>
        <end position="11"/>
    </location>
</feature>
<feature type="helix" evidence="15">
    <location>
        <begin position="14"/>
        <end position="20"/>
    </location>
</feature>
<feature type="helix" evidence="15">
    <location>
        <begin position="30"/>
        <end position="54"/>
    </location>
</feature>
<feature type="strand" evidence="14">
    <location>
        <begin position="57"/>
        <end position="59"/>
    </location>
</feature>
<feature type="strand" evidence="17">
    <location>
        <begin position="64"/>
        <end position="67"/>
    </location>
</feature>
<feature type="helix" evidence="15">
    <location>
        <begin position="70"/>
        <end position="79"/>
    </location>
</feature>
<feature type="helix" evidence="15">
    <location>
        <begin position="82"/>
        <end position="100"/>
    </location>
</feature>
<feature type="strand" evidence="15">
    <location>
        <begin position="107"/>
        <end position="112"/>
    </location>
</feature>
<feature type="strand" evidence="15">
    <location>
        <begin position="115"/>
        <end position="123"/>
    </location>
</feature>
<feature type="strand" evidence="15">
    <location>
        <begin position="125"/>
        <end position="130"/>
    </location>
</feature>
<feature type="strand" evidence="15">
    <location>
        <begin position="134"/>
        <end position="136"/>
    </location>
</feature>
<feature type="helix" evidence="15">
    <location>
        <begin position="140"/>
        <end position="152"/>
    </location>
</feature>
<feature type="strand" evidence="15">
    <location>
        <begin position="155"/>
        <end position="161"/>
    </location>
</feature>
<feature type="helix" evidence="15">
    <location>
        <begin position="167"/>
        <end position="175"/>
    </location>
</feature>
<feature type="strand" evidence="15">
    <location>
        <begin position="180"/>
        <end position="183"/>
    </location>
</feature>
<feature type="helix" evidence="15">
    <location>
        <begin position="186"/>
        <end position="195"/>
    </location>
</feature>
<feature type="strand" evidence="15">
    <location>
        <begin position="198"/>
        <end position="200"/>
    </location>
</feature>
<feature type="strand" evidence="15">
    <location>
        <begin position="204"/>
        <end position="207"/>
    </location>
</feature>
<feature type="helix" evidence="15">
    <location>
        <begin position="212"/>
        <end position="223"/>
    </location>
</feature>
<feature type="strand" evidence="16">
    <location>
        <begin position="225"/>
        <end position="227"/>
    </location>
</feature>
<feature type="strand" evidence="15">
    <location>
        <begin position="229"/>
        <end position="231"/>
    </location>
</feature>
<feature type="strand" evidence="15">
    <location>
        <begin position="238"/>
        <end position="243"/>
    </location>
</feature>
<feature type="helix" evidence="15">
    <location>
        <begin position="249"/>
        <end position="260"/>
    </location>
</feature>
<feature type="strand" evidence="15">
    <location>
        <begin position="267"/>
        <end position="273"/>
    </location>
</feature>
<feature type="helix" evidence="15">
    <location>
        <begin position="275"/>
        <end position="289"/>
    </location>
</feature>
<feature type="helix" evidence="15">
    <location>
        <begin position="295"/>
        <end position="302"/>
    </location>
</feature>
<feature type="strand" evidence="15">
    <location>
        <begin position="306"/>
        <end position="309"/>
    </location>
</feature>
<feature type="helix" evidence="15">
    <location>
        <begin position="313"/>
        <end position="323"/>
    </location>
</feature>
<feature type="strand" evidence="15">
    <location>
        <begin position="326"/>
        <end position="332"/>
    </location>
</feature>
<feature type="helix" evidence="15">
    <location>
        <begin position="335"/>
        <end position="338"/>
    </location>
</feature>
<feature type="helix" evidence="15">
    <location>
        <begin position="339"/>
        <end position="341"/>
    </location>
</feature>
<feature type="strand" evidence="15">
    <location>
        <begin position="346"/>
        <end position="351"/>
    </location>
</feature>
<feature type="helix" evidence="15">
    <location>
        <begin position="356"/>
        <end position="361"/>
    </location>
</feature>
<feature type="strand" evidence="15">
    <location>
        <begin position="363"/>
        <end position="365"/>
    </location>
</feature>
<feature type="helix" evidence="15">
    <location>
        <begin position="374"/>
        <end position="376"/>
    </location>
</feature>
<feature type="helix" evidence="15">
    <location>
        <begin position="383"/>
        <end position="386"/>
    </location>
</feature>
<feature type="strand" evidence="15">
    <location>
        <begin position="387"/>
        <end position="395"/>
    </location>
</feature>
<feature type="helix" evidence="15">
    <location>
        <begin position="397"/>
        <end position="413"/>
    </location>
</feature>
<feature type="helix" evidence="15">
    <location>
        <begin position="417"/>
        <end position="433"/>
    </location>
</feature>
<evidence type="ECO:0000255" key="1">
    <source>
        <dbReference type="HAMAP-Rule" id="MF_01024"/>
    </source>
</evidence>
<evidence type="ECO:0000269" key="2">
    <source>
    </source>
</evidence>
<evidence type="ECO:0000269" key="3">
    <source>
    </source>
</evidence>
<evidence type="ECO:0000303" key="4">
    <source>
    </source>
</evidence>
<evidence type="ECO:0000305" key="5"/>
<evidence type="ECO:0000305" key="6">
    <source>
    </source>
</evidence>
<evidence type="ECO:0000312" key="7">
    <source>
        <dbReference type="EMBL" id="CAA27610.1"/>
    </source>
</evidence>
<evidence type="ECO:0000312" key="8">
    <source>
        <dbReference type="EMBL" id="CAA31812.1"/>
    </source>
</evidence>
<evidence type="ECO:0000312" key="9">
    <source>
        <dbReference type="EMBL" id="CAA36882.1"/>
    </source>
</evidence>
<evidence type="ECO:0007744" key="10">
    <source>
        <dbReference type="PDB" id="1K75"/>
    </source>
</evidence>
<evidence type="ECO:0007744" key="11">
    <source>
        <dbReference type="PDB" id="1KAE"/>
    </source>
</evidence>
<evidence type="ECO:0007744" key="12">
    <source>
        <dbReference type="PDB" id="1KAH"/>
    </source>
</evidence>
<evidence type="ECO:0007744" key="13">
    <source>
        <dbReference type="PDB" id="1KAR"/>
    </source>
</evidence>
<evidence type="ECO:0007829" key="14">
    <source>
        <dbReference type="PDB" id="1K75"/>
    </source>
</evidence>
<evidence type="ECO:0007829" key="15">
    <source>
        <dbReference type="PDB" id="1KAE"/>
    </source>
</evidence>
<evidence type="ECO:0007829" key="16">
    <source>
        <dbReference type="PDB" id="1KAH"/>
    </source>
</evidence>
<evidence type="ECO:0007829" key="17">
    <source>
        <dbReference type="PDB" id="1KAR"/>
    </source>
</evidence>
<accession>P06988</accession>
<accession>O08506</accession>
<accession>P78076</accession>
<accession>Q47254</accession>
<protein>
    <recommendedName>
        <fullName evidence="1">Histidinol dehydrogenase</fullName>
        <shortName evidence="1">HDH</shortName>
        <ecNumber evidence="1">1.1.1.23</ecNumber>
    </recommendedName>
</protein>
<keyword id="KW-0002">3D-structure</keyword>
<keyword id="KW-0028">Amino-acid biosynthesis</keyword>
<keyword id="KW-0903">Direct protein sequencing</keyword>
<keyword id="KW-0368">Histidine biosynthesis</keyword>
<keyword id="KW-0479">Metal-binding</keyword>
<keyword id="KW-0520">NAD</keyword>
<keyword id="KW-0560">Oxidoreductase</keyword>
<keyword id="KW-1185">Reference proteome</keyword>
<keyword id="KW-0862">Zinc</keyword>
<comment type="function">
    <text evidence="1">Catalyzes the sequential NAD-dependent oxidations of L-histidinol to L-histidinaldehyde and then to L-histidine.</text>
</comment>
<comment type="catalytic activity">
    <reaction evidence="1">
        <text>L-histidinol + 2 NAD(+) + H2O = L-histidine + 2 NADH + 3 H(+)</text>
        <dbReference type="Rhea" id="RHEA:20641"/>
        <dbReference type="ChEBI" id="CHEBI:15377"/>
        <dbReference type="ChEBI" id="CHEBI:15378"/>
        <dbReference type="ChEBI" id="CHEBI:57540"/>
        <dbReference type="ChEBI" id="CHEBI:57595"/>
        <dbReference type="ChEBI" id="CHEBI:57699"/>
        <dbReference type="ChEBI" id="CHEBI:57945"/>
        <dbReference type="EC" id="1.1.1.23"/>
    </reaction>
</comment>
<comment type="cofactor">
    <cofactor evidence="2">
        <name>Zn(2+)</name>
        <dbReference type="ChEBI" id="CHEBI:29105"/>
    </cofactor>
    <text evidence="2">Binds 1 zinc ion per subunit.</text>
</comment>
<comment type="pathway">
    <text evidence="1">Amino-acid biosynthesis; L-histidine biosynthesis; L-histidine from 5-phospho-alpha-D-ribose 1-diphosphate: step 9/9.</text>
</comment>
<comment type="subunit">
    <text evidence="1">Homodimer.</text>
</comment>
<comment type="similarity">
    <text evidence="1 5">Belongs to the histidinol dehydrogenase family.</text>
</comment>
<dbReference type="EC" id="1.1.1.23" evidence="1"/>
<dbReference type="EMBL" id="X13462">
    <property type="protein sequence ID" value="CAA31812.1"/>
    <property type="molecule type" value="Genomic_DNA"/>
</dbReference>
<dbReference type="EMBL" id="X03972">
    <property type="protein sequence ID" value="CAA27610.1"/>
    <property type="molecule type" value="Genomic_DNA"/>
</dbReference>
<dbReference type="EMBL" id="X52656">
    <property type="protein sequence ID" value="CAA36882.1"/>
    <property type="molecule type" value="Genomic_DNA"/>
</dbReference>
<dbReference type="EMBL" id="U00096">
    <property type="protein sequence ID" value="AAC75081.1"/>
    <property type="molecule type" value="Genomic_DNA"/>
</dbReference>
<dbReference type="EMBL" id="AP009048">
    <property type="protein sequence ID" value="BAA15851.2"/>
    <property type="molecule type" value="Genomic_DNA"/>
</dbReference>
<dbReference type="EMBL" id="M10483">
    <property type="protein sequence ID" value="AAA23962.1"/>
    <property type="molecule type" value="Genomic_DNA"/>
</dbReference>
<dbReference type="PIR" id="C64967">
    <property type="entry name" value="DEECHT"/>
</dbReference>
<dbReference type="RefSeq" id="NP_416524.1">
    <property type="nucleotide sequence ID" value="NC_000913.3"/>
</dbReference>
<dbReference type="RefSeq" id="WP_000009594.1">
    <property type="nucleotide sequence ID" value="NZ_LN832404.1"/>
</dbReference>
<dbReference type="PDB" id="1K75">
    <property type="method" value="X-ray"/>
    <property type="resolution" value="1.75 A"/>
    <property type="chains" value="A/B=1-434"/>
</dbReference>
<dbReference type="PDB" id="1KAE">
    <property type="method" value="X-ray"/>
    <property type="resolution" value="1.70 A"/>
    <property type="chains" value="A/B=1-434"/>
</dbReference>
<dbReference type="PDB" id="1KAH">
    <property type="method" value="X-ray"/>
    <property type="resolution" value="2.10 A"/>
    <property type="chains" value="A/B=1-434"/>
</dbReference>
<dbReference type="PDB" id="1KAR">
    <property type="method" value="X-ray"/>
    <property type="resolution" value="2.10 A"/>
    <property type="chains" value="A/B=1-434"/>
</dbReference>
<dbReference type="PDBsum" id="1K75"/>
<dbReference type="PDBsum" id="1KAE"/>
<dbReference type="PDBsum" id="1KAH"/>
<dbReference type="PDBsum" id="1KAR"/>
<dbReference type="SMR" id="P06988"/>
<dbReference type="BioGRID" id="4260403">
    <property type="interactions" value="34"/>
</dbReference>
<dbReference type="BioGRID" id="850878">
    <property type="interactions" value="1"/>
</dbReference>
<dbReference type="FunCoup" id="P06988">
    <property type="interactions" value="813"/>
</dbReference>
<dbReference type="IntAct" id="P06988">
    <property type="interactions" value="7"/>
</dbReference>
<dbReference type="STRING" id="511145.b2020"/>
<dbReference type="ChEMBL" id="CHEMBL2366464"/>
<dbReference type="DrugBank" id="DB04447">
    <property type="generic name" value="1,4-Dithiothreitol"/>
</dbReference>
<dbReference type="DrugBank" id="DB03811">
    <property type="generic name" value="Histidinol"/>
</dbReference>
<dbReference type="DrugBank" id="DB03366">
    <property type="generic name" value="Imidazole"/>
</dbReference>
<dbReference type="jPOST" id="P06988"/>
<dbReference type="PaxDb" id="511145-b2020"/>
<dbReference type="EnsemblBacteria" id="AAC75081">
    <property type="protein sequence ID" value="AAC75081"/>
    <property type="gene ID" value="b2020"/>
</dbReference>
<dbReference type="GeneID" id="946531"/>
<dbReference type="KEGG" id="ecj:JW2002"/>
<dbReference type="KEGG" id="eco:b2020"/>
<dbReference type="KEGG" id="ecoc:C3026_11390"/>
<dbReference type="PATRIC" id="fig|1411691.4.peg.232"/>
<dbReference type="EchoBASE" id="EB0442"/>
<dbReference type="eggNOG" id="COG0141">
    <property type="taxonomic scope" value="Bacteria"/>
</dbReference>
<dbReference type="InParanoid" id="P06988"/>
<dbReference type="OMA" id="YIAGPNH"/>
<dbReference type="OrthoDB" id="9805269at2"/>
<dbReference type="PhylomeDB" id="P06988"/>
<dbReference type="BioCyc" id="EcoCyc:HISTDEHYD-MONOMER"/>
<dbReference type="BioCyc" id="MetaCyc:HISTDEHYD-MONOMER"/>
<dbReference type="BRENDA" id="1.1.1.23">
    <property type="organism ID" value="2026"/>
</dbReference>
<dbReference type="UniPathway" id="UPA00031">
    <property type="reaction ID" value="UER00014"/>
</dbReference>
<dbReference type="EvolutionaryTrace" id="P06988"/>
<dbReference type="PRO" id="PR:P06988"/>
<dbReference type="Proteomes" id="UP000000625">
    <property type="component" value="Chromosome"/>
</dbReference>
<dbReference type="GO" id="GO:0005737">
    <property type="term" value="C:cytoplasm"/>
    <property type="evidence" value="ECO:0000318"/>
    <property type="project" value="GO_Central"/>
</dbReference>
<dbReference type="GO" id="GO:0005829">
    <property type="term" value="C:cytosol"/>
    <property type="evidence" value="ECO:0000314"/>
    <property type="project" value="EcoCyc"/>
</dbReference>
<dbReference type="GO" id="GO:0004399">
    <property type="term" value="F:histidinol dehydrogenase activity"/>
    <property type="evidence" value="ECO:0000314"/>
    <property type="project" value="EcoCyc"/>
</dbReference>
<dbReference type="GO" id="GO:0030145">
    <property type="term" value="F:manganese ion binding"/>
    <property type="evidence" value="ECO:0000314"/>
    <property type="project" value="EcoCyc"/>
</dbReference>
<dbReference type="GO" id="GO:0046872">
    <property type="term" value="F:metal ion binding"/>
    <property type="evidence" value="ECO:0000314"/>
    <property type="project" value="EcoCyc"/>
</dbReference>
<dbReference type="GO" id="GO:0051287">
    <property type="term" value="F:NAD binding"/>
    <property type="evidence" value="ECO:0007669"/>
    <property type="project" value="InterPro"/>
</dbReference>
<dbReference type="GO" id="GO:0008270">
    <property type="term" value="F:zinc ion binding"/>
    <property type="evidence" value="ECO:0007669"/>
    <property type="project" value="UniProtKB-UniRule"/>
</dbReference>
<dbReference type="GO" id="GO:0000105">
    <property type="term" value="P:L-histidine biosynthetic process"/>
    <property type="evidence" value="ECO:0000314"/>
    <property type="project" value="EcoCyc"/>
</dbReference>
<dbReference type="CDD" id="cd06572">
    <property type="entry name" value="Histidinol_dh"/>
    <property type="match status" value="1"/>
</dbReference>
<dbReference type="FunFam" id="1.20.5.1300:FF:000001">
    <property type="entry name" value="Histidine biosynthesis trifunctional protein"/>
    <property type="match status" value="1"/>
</dbReference>
<dbReference type="FunFam" id="3.40.50.1980:FF:000001">
    <property type="entry name" value="Histidinol dehydrogenase"/>
    <property type="match status" value="1"/>
</dbReference>
<dbReference type="Gene3D" id="1.20.5.1300">
    <property type="match status" value="1"/>
</dbReference>
<dbReference type="Gene3D" id="3.40.50.1980">
    <property type="entry name" value="Nitrogenase molybdenum iron protein domain"/>
    <property type="match status" value="2"/>
</dbReference>
<dbReference type="HAMAP" id="MF_01024">
    <property type="entry name" value="HisD"/>
    <property type="match status" value="1"/>
</dbReference>
<dbReference type="InterPro" id="IPR016161">
    <property type="entry name" value="Ald_DH/histidinol_DH"/>
</dbReference>
<dbReference type="InterPro" id="IPR001692">
    <property type="entry name" value="Histidinol_DH_CS"/>
</dbReference>
<dbReference type="InterPro" id="IPR022695">
    <property type="entry name" value="Histidinol_DH_monofunct"/>
</dbReference>
<dbReference type="InterPro" id="IPR012131">
    <property type="entry name" value="Hstdl_DH"/>
</dbReference>
<dbReference type="NCBIfam" id="TIGR00069">
    <property type="entry name" value="hisD"/>
    <property type="match status" value="1"/>
</dbReference>
<dbReference type="PANTHER" id="PTHR21256:SF2">
    <property type="entry name" value="HISTIDINE BIOSYNTHESIS TRIFUNCTIONAL PROTEIN"/>
    <property type="match status" value="1"/>
</dbReference>
<dbReference type="PANTHER" id="PTHR21256">
    <property type="entry name" value="HISTIDINOL DEHYDROGENASE HDH"/>
    <property type="match status" value="1"/>
</dbReference>
<dbReference type="Pfam" id="PF00815">
    <property type="entry name" value="Histidinol_dh"/>
    <property type="match status" value="1"/>
</dbReference>
<dbReference type="PIRSF" id="PIRSF000099">
    <property type="entry name" value="Histidinol_dh"/>
    <property type="match status" value="1"/>
</dbReference>
<dbReference type="PRINTS" id="PR00083">
    <property type="entry name" value="HOLDHDRGNASE"/>
</dbReference>
<dbReference type="SUPFAM" id="SSF53720">
    <property type="entry name" value="ALDH-like"/>
    <property type="match status" value="1"/>
</dbReference>
<dbReference type="PROSITE" id="PS00611">
    <property type="entry name" value="HISOL_DEHYDROGENASE"/>
    <property type="match status" value="1"/>
</dbReference>
<sequence length="434" mass="46110">MSFNTIIDWNSCTAEQQRQLLMRPAISASESITRTVNDILDNVKARGDEALREYSAKFDKTTVTALKVSAEEIAAASERLSDELKQAMAVAVKNIETFHTAQKLPPVDVETQPGVRCQQVTRPVASVGLYIPGGSAPLFSTVLMLATPASIAGCKKVVLCSPPPIADEILYAAQLCGVQDVFNVGGAQAIAALAFGTESVPKVDKIFGPGNAFVTEAKRQVSQRLDGAAIDMPAGPSEVLVIADSGATPDFVASDLLSQAEHGPDSQVILLTPAADMARRVAEAVERQLAELPRAETARQALNASRLIVTKDLAQCVEISNQYGPEHLIIQTRNARELVDSITSAGSVFLGDWSPESAGDYASGTNHVLPTYGYTATCSSLGLADFQKRMTVQELSKEGFSALASTIETLAAAERLTAHKNAVTLRVNALKEQA</sequence>
<name>HISX_ECOLI</name>